<evidence type="ECO:0000255" key="1"/>
<evidence type="ECO:0000256" key="2">
    <source>
        <dbReference type="SAM" id="MobiDB-lite"/>
    </source>
</evidence>
<evidence type="ECO:0000269" key="3">
    <source>
    </source>
</evidence>
<evidence type="ECO:0000303" key="4">
    <source>
    </source>
</evidence>
<evidence type="ECO:0000305" key="5"/>
<evidence type="ECO:0000312" key="6">
    <source>
        <dbReference type="Araport" id="AT3G57540"/>
    </source>
</evidence>
<evidence type="ECO:0000312" key="7">
    <source>
        <dbReference type="EMBL" id="CAB66111.1"/>
    </source>
</evidence>
<organism>
    <name type="scientific">Arabidopsis thaliana</name>
    <name type="common">Mouse-ear cress</name>
    <dbReference type="NCBI Taxonomy" id="3702"/>
    <lineage>
        <taxon>Eukaryota</taxon>
        <taxon>Viridiplantae</taxon>
        <taxon>Streptophyta</taxon>
        <taxon>Embryophyta</taxon>
        <taxon>Tracheophyta</taxon>
        <taxon>Spermatophyta</taxon>
        <taxon>Magnoliopsida</taxon>
        <taxon>eudicotyledons</taxon>
        <taxon>Gunneridae</taxon>
        <taxon>Pentapetalae</taxon>
        <taxon>rosids</taxon>
        <taxon>malvids</taxon>
        <taxon>Brassicales</taxon>
        <taxon>Brassicaceae</taxon>
        <taxon>Camelineae</taxon>
        <taxon>Arabidopsis</taxon>
    </lineage>
</organism>
<gene>
    <name evidence="4" type="primary">REM4.1</name>
    <name evidence="6" type="ordered locus">At3g57540</name>
    <name evidence="7" type="ORF">T8H10.14</name>
</gene>
<proteinExistence type="evidence at protein level"/>
<name>RMR41_ARATH</name>
<sequence length="296" mass="32867">MLTLYGQERSPENSTTSTTDASDRRDETPSSEIVVRDIHAMTTTTELTRPQQRGSGGGYLSPSRSIAFSDGTTSSGENFTTVSREFNALVIAGSSMDNNSNGTNQSGGHRDVIRDERNELTRIGENDDVGDHGQVPEEDSNPWAIVPDDYNNRDGSENNIVLASSGGQNRMVTTASVQRVKREEVEAKITAWQTAKVAKINNRFKRQDAVINGWLNEQVHRANSWMKKIERKLEDRRAKAMEKTQNKVAKAQRKAEERRATAEGKRGTEVARVLEVANLMRAVGRPPAKRSFFSLS</sequence>
<comment type="function">
    <text evidence="3">Collaborates with REM4.2 to positively regulate the BCTV and BSCTV susceptibility.</text>
</comment>
<comment type="subunit">
    <text evidence="3">Forms homodimer and heterodimer with REM4.2 (PubMed:25289013). Interacts with KIN11 (PubMed:25289013).</text>
</comment>
<comment type="subcellular location">
    <subcellularLocation>
        <location evidence="3">Cell membrane</location>
    </subcellularLocation>
</comment>
<comment type="tissue specificity">
    <text evidence="3">Predominantly detected in bud, stem, root, flower, silique, and leaves, and enhanced dramatically in senescence leaf.</text>
</comment>
<comment type="induction">
    <text evidence="3">Induced by mannitol, NaCl, drought, as well exogenous abscisic acid (ABA) application.</text>
</comment>
<comment type="PTM">
    <text evidence="3">Phosphorylated by KIN11.</text>
</comment>
<comment type="PTM">
    <text evidence="3">Probably ubiquitinated and degraded by the 26S proteasome pathway.</text>
</comment>
<comment type="disruption phenotype">
    <text evidence="3">Slightly reduced susceptibility to Beet Curly Top Virus (BCTV) and Beet Severe Curly Top Virus (BSCTV). The double mutant rem4.1 rem4.2 displays resistance to BCTV and BSCTV.</text>
</comment>
<comment type="similarity">
    <text evidence="5">Belongs to the remorin family.</text>
</comment>
<comment type="sequence caution" evidence="5">
    <conflict type="erroneous initiation">
        <sequence resource="EMBL-CDS" id="CAB66111"/>
    </conflict>
    <text>Truncated N-terminus.</text>
</comment>
<accession>Q93YN8</accession>
<accession>Q9SCL9</accession>
<protein>
    <recommendedName>
        <fullName evidence="5">Remorin 4.1</fullName>
        <shortName evidence="4">AtREM4.1</shortName>
    </recommendedName>
    <alternativeName>
        <fullName evidence="5">Remorin group 4 member 1</fullName>
    </alternativeName>
</protein>
<reference key="1">
    <citation type="journal article" date="2000" name="Nature">
        <title>Sequence and analysis of chromosome 3 of the plant Arabidopsis thaliana.</title>
        <authorList>
            <person name="Salanoubat M."/>
            <person name="Lemcke K."/>
            <person name="Rieger M."/>
            <person name="Ansorge W."/>
            <person name="Unseld M."/>
            <person name="Fartmann B."/>
            <person name="Valle G."/>
            <person name="Bloecker H."/>
            <person name="Perez-Alonso M."/>
            <person name="Obermaier B."/>
            <person name="Delseny M."/>
            <person name="Boutry M."/>
            <person name="Grivell L.A."/>
            <person name="Mache R."/>
            <person name="Puigdomenech P."/>
            <person name="De Simone V."/>
            <person name="Choisne N."/>
            <person name="Artiguenave F."/>
            <person name="Robert C."/>
            <person name="Brottier P."/>
            <person name="Wincker P."/>
            <person name="Cattolico L."/>
            <person name="Weissenbach J."/>
            <person name="Saurin W."/>
            <person name="Quetier F."/>
            <person name="Schaefer M."/>
            <person name="Mueller-Auer S."/>
            <person name="Gabel C."/>
            <person name="Fuchs M."/>
            <person name="Benes V."/>
            <person name="Wurmbach E."/>
            <person name="Drzonek H."/>
            <person name="Erfle H."/>
            <person name="Jordan N."/>
            <person name="Bangert S."/>
            <person name="Wiedelmann R."/>
            <person name="Kranz H."/>
            <person name="Voss H."/>
            <person name="Holland R."/>
            <person name="Brandt P."/>
            <person name="Nyakatura G."/>
            <person name="Vezzi A."/>
            <person name="D'Angelo M."/>
            <person name="Pallavicini A."/>
            <person name="Toppo S."/>
            <person name="Simionati B."/>
            <person name="Conrad A."/>
            <person name="Hornischer K."/>
            <person name="Kauer G."/>
            <person name="Loehnert T.-H."/>
            <person name="Nordsiek G."/>
            <person name="Reichelt J."/>
            <person name="Scharfe M."/>
            <person name="Schoen O."/>
            <person name="Bargues M."/>
            <person name="Terol J."/>
            <person name="Climent J."/>
            <person name="Navarro P."/>
            <person name="Collado C."/>
            <person name="Perez-Perez A."/>
            <person name="Ottenwaelder B."/>
            <person name="Duchemin D."/>
            <person name="Cooke R."/>
            <person name="Laudie M."/>
            <person name="Berger-Llauro C."/>
            <person name="Purnelle B."/>
            <person name="Masuy D."/>
            <person name="de Haan M."/>
            <person name="Maarse A.C."/>
            <person name="Alcaraz J.-P."/>
            <person name="Cottet A."/>
            <person name="Casacuberta E."/>
            <person name="Monfort A."/>
            <person name="Argiriou A."/>
            <person name="Flores M."/>
            <person name="Liguori R."/>
            <person name="Vitale D."/>
            <person name="Mannhaupt G."/>
            <person name="Haase D."/>
            <person name="Schoof H."/>
            <person name="Rudd S."/>
            <person name="Zaccaria P."/>
            <person name="Mewes H.-W."/>
            <person name="Mayer K.F.X."/>
            <person name="Kaul S."/>
            <person name="Town C.D."/>
            <person name="Koo H.L."/>
            <person name="Tallon L.J."/>
            <person name="Jenkins J."/>
            <person name="Rooney T."/>
            <person name="Rizzo M."/>
            <person name="Walts A."/>
            <person name="Utterback T."/>
            <person name="Fujii C.Y."/>
            <person name="Shea T.P."/>
            <person name="Creasy T.H."/>
            <person name="Haas B."/>
            <person name="Maiti R."/>
            <person name="Wu D."/>
            <person name="Peterson J."/>
            <person name="Van Aken S."/>
            <person name="Pai G."/>
            <person name="Militscher J."/>
            <person name="Sellers P."/>
            <person name="Gill J.E."/>
            <person name="Feldblyum T.V."/>
            <person name="Preuss D."/>
            <person name="Lin X."/>
            <person name="Nierman W.C."/>
            <person name="Salzberg S.L."/>
            <person name="White O."/>
            <person name="Venter J.C."/>
            <person name="Fraser C.M."/>
            <person name="Kaneko T."/>
            <person name="Nakamura Y."/>
            <person name="Sato S."/>
            <person name="Kato T."/>
            <person name="Asamizu E."/>
            <person name="Sasamoto S."/>
            <person name="Kimura T."/>
            <person name="Idesawa K."/>
            <person name="Kawashima K."/>
            <person name="Kishida Y."/>
            <person name="Kiyokawa C."/>
            <person name="Kohara M."/>
            <person name="Matsumoto M."/>
            <person name="Matsuno A."/>
            <person name="Muraki A."/>
            <person name="Nakayama S."/>
            <person name="Nakazaki N."/>
            <person name="Shinpo S."/>
            <person name="Takeuchi C."/>
            <person name="Wada T."/>
            <person name="Watanabe A."/>
            <person name="Yamada M."/>
            <person name="Yasuda M."/>
            <person name="Tabata S."/>
        </authorList>
    </citation>
    <scope>NUCLEOTIDE SEQUENCE [LARGE SCALE GENOMIC DNA]</scope>
    <source>
        <strain>cv. Columbia</strain>
    </source>
</reference>
<reference key="2">
    <citation type="journal article" date="2017" name="Plant J.">
        <title>Araport11: a complete reannotation of the Arabidopsis thaliana reference genome.</title>
        <authorList>
            <person name="Cheng C.Y."/>
            <person name="Krishnakumar V."/>
            <person name="Chan A.P."/>
            <person name="Thibaud-Nissen F."/>
            <person name="Schobel S."/>
            <person name="Town C.D."/>
        </authorList>
    </citation>
    <scope>GENOME REANNOTATION</scope>
    <source>
        <strain>cv. Columbia</strain>
    </source>
</reference>
<reference key="3">
    <citation type="journal article" date="2003" name="Science">
        <title>Empirical analysis of transcriptional activity in the Arabidopsis genome.</title>
        <authorList>
            <person name="Yamada K."/>
            <person name="Lim J."/>
            <person name="Dale J.M."/>
            <person name="Chen H."/>
            <person name="Shinn P."/>
            <person name="Palm C.J."/>
            <person name="Southwick A.M."/>
            <person name="Wu H.C."/>
            <person name="Kim C.J."/>
            <person name="Nguyen M."/>
            <person name="Pham P.K."/>
            <person name="Cheuk R.F."/>
            <person name="Karlin-Newmann G."/>
            <person name="Liu S.X."/>
            <person name="Lam B."/>
            <person name="Sakano H."/>
            <person name="Wu T."/>
            <person name="Yu G."/>
            <person name="Miranda M."/>
            <person name="Quach H.L."/>
            <person name="Tripp M."/>
            <person name="Chang C.H."/>
            <person name="Lee J.M."/>
            <person name="Toriumi M.J."/>
            <person name="Chan M.M."/>
            <person name="Tang C.C."/>
            <person name="Onodera C.S."/>
            <person name="Deng J.M."/>
            <person name="Akiyama K."/>
            <person name="Ansari Y."/>
            <person name="Arakawa T."/>
            <person name="Banh J."/>
            <person name="Banno F."/>
            <person name="Bowser L."/>
            <person name="Brooks S.Y."/>
            <person name="Carninci P."/>
            <person name="Chao Q."/>
            <person name="Choy N."/>
            <person name="Enju A."/>
            <person name="Goldsmith A.D."/>
            <person name="Gurjal M."/>
            <person name="Hansen N.F."/>
            <person name="Hayashizaki Y."/>
            <person name="Johnson-Hopson C."/>
            <person name="Hsuan V.W."/>
            <person name="Iida K."/>
            <person name="Karnes M."/>
            <person name="Khan S."/>
            <person name="Koesema E."/>
            <person name="Ishida J."/>
            <person name="Jiang P.X."/>
            <person name="Jones T."/>
            <person name="Kawai J."/>
            <person name="Kamiya A."/>
            <person name="Meyers C."/>
            <person name="Nakajima M."/>
            <person name="Narusaka M."/>
            <person name="Seki M."/>
            <person name="Sakurai T."/>
            <person name="Satou M."/>
            <person name="Tamse R."/>
            <person name="Vaysberg M."/>
            <person name="Wallender E.K."/>
            <person name="Wong C."/>
            <person name="Yamamura Y."/>
            <person name="Yuan S."/>
            <person name="Shinozaki K."/>
            <person name="Davis R.W."/>
            <person name="Theologis A."/>
            <person name="Ecker J.R."/>
        </authorList>
    </citation>
    <scope>NUCLEOTIDE SEQUENCE [LARGE SCALE MRNA]</scope>
    <source>
        <strain>cv. Columbia</strain>
    </source>
</reference>
<reference key="4">
    <citation type="journal article" date="2007" name="Plant Physiol.">
        <title>Genome-wide annotation of remorins, a plant-specific protein family: evolutionary and functional perspectives.</title>
        <authorList>
            <person name="Raffaele S."/>
            <person name="Mongrand S."/>
            <person name="Gamas P."/>
            <person name="Niebel A."/>
            <person name="Ott T."/>
        </authorList>
    </citation>
    <scope>GENE FAMILY</scope>
</reference>
<reference key="5">
    <citation type="journal article" date="2014" name="Plant Pathol. J.">
        <title>Arabidopsis thaliana remorins interact with SnRK1 and play a role in susceptibility to Beet Curly Top Virus and Beet Severe Curly Top Virus.</title>
        <authorList>
            <person name="Son S."/>
            <person name="Oh C.J."/>
            <person name="An C.S."/>
        </authorList>
    </citation>
    <scope>INDUCTION</scope>
    <scope>TISSUE SPECIFICITY</scope>
    <scope>SUBCELLULAR LOCATION</scope>
    <scope>SUBUNIT</scope>
    <scope>INTERACTION WITH REM4.2 AND KIN11</scope>
    <scope>DISRUPTION PHENOTYPE</scope>
    <scope>FUNCTION</scope>
    <scope>PHOSPHORYLATION BY KIN11</scope>
</reference>
<feature type="chain" id="PRO_0000445510" description="Remorin 4.1">
    <location>
        <begin position="1"/>
        <end position="296"/>
    </location>
</feature>
<feature type="region of interest" description="Disordered" evidence="2">
    <location>
        <begin position="1"/>
        <end position="78"/>
    </location>
</feature>
<feature type="region of interest" description="Disordered" evidence="2">
    <location>
        <begin position="121"/>
        <end position="142"/>
    </location>
</feature>
<feature type="region of interest" description="Disordered" evidence="2">
    <location>
        <begin position="242"/>
        <end position="266"/>
    </location>
</feature>
<feature type="coiled-coil region" evidence="1">
    <location>
        <begin position="226"/>
        <end position="261"/>
    </location>
</feature>
<feature type="compositionally biased region" description="Basic and acidic residues" evidence="2">
    <location>
        <begin position="21"/>
        <end position="39"/>
    </location>
</feature>
<feature type="compositionally biased region" description="Polar residues" evidence="2">
    <location>
        <begin position="41"/>
        <end position="53"/>
    </location>
</feature>
<feature type="compositionally biased region" description="Polar residues" evidence="2">
    <location>
        <begin position="62"/>
        <end position="78"/>
    </location>
</feature>
<feature type="compositionally biased region" description="Basic and acidic residues" evidence="2">
    <location>
        <begin position="121"/>
        <end position="135"/>
    </location>
</feature>
<feature type="compositionally biased region" description="Basic and acidic residues" evidence="2">
    <location>
        <begin position="253"/>
        <end position="266"/>
    </location>
</feature>
<keyword id="KW-1003">Cell membrane</keyword>
<keyword id="KW-0175">Coiled coil</keyword>
<keyword id="KW-0472">Membrane</keyword>
<keyword id="KW-0597">Phosphoprotein</keyword>
<keyword id="KW-1185">Reference proteome</keyword>
<keyword id="KW-0832">Ubl conjugation</keyword>
<dbReference type="EMBL" id="AL133248">
    <property type="protein sequence ID" value="CAB66111.1"/>
    <property type="status" value="ALT_INIT"/>
    <property type="molecule type" value="Genomic_DNA"/>
</dbReference>
<dbReference type="EMBL" id="CP002686">
    <property type="protein sequence ID" value="AEE79669.1"/>
    <property type="molecule type" value="Genomic_DNA"/>
</dbReference>
<dbReference type="EMBL" id="AY059900">
    <property type="protein sequence ID" value="AAL24382.1"/>
    <property type="molecule type" value="mRNA"/>
</dbReference>
<dbReference type="EMBL" id="BT001233">
    <property type="protein sequence ID" value="AAN65120.1"/>
    <property type="molecule type" value="mRNA"/>
</dbReference>
<dbReference type="PIR" id="T46190">
    <property type="entry name" value="T46190"/>
</dbReference>
<dbReference type="RefSeq" id="NP_567050.1">
    <property type="nucleotide sequence ID" value="NM_115614.3"/>
</dbReference>
<dbReference type="SMR" id="Q93YN8"/>
<dbReference type="FunCoup" id="Q93YN8">
    <property type="interactions" value="140"/>
</dbReference>
<dbReference type="IntAct" id="Q93YN8">
    <property type="interactions" value="2"/>
</dbReference>
<dbReference type="STRING" id="3702.Q93YN8"/>
<dbReference type="iPTMnet" id="Q93YN8"/>
<dbReference type="PaxDb" id="3702-AT3G57540.1"/>
<dbReference type="ProteomicsDB" id="228130"/>
<dbReference type="EnsemblPlants" id="AT3G57540.1">
    <property type="protein sequence ID" value="AT3G57540.1"/>
    <property type="gene ID" value="AT3G57540"/>
</dbReference>
<dbReference type="GeneID" id="824921"/>
<dbReference type="Gramene" id="AT3G57540.1">
    <property type="protein sequence ID" value="AT3G57540.1"/>
    <property type="gene ID" value="AT3G57540"/>
</dbReference>
<dbReference type="KEGG" id="ath:AT3G57540"/>
<dbReference type="Araport" id="AT3G57540"/>
<dbReference type="TAIR" id="AT3G57540">
    <property type="gene designation" value="REM4.1"/>
</dbReference>
<dbReference type="eggNOG" id="ENOG502QTT4">
    <property type="taxonomic scope" value="Eukaryota"/>
</dbReference>
<dbReference type="HOGENOM" id="CLU_053612_1_0_1"/>
<dbReference type="InParanoid" id="Q93YN8"/>
<dbReference type="OMA" id="HEHETAN"/>
<dbReference type="PhylomeDB" id="Q93YN8"/>
<dbReference type="PRO" id="PR:Q93YN8"/>
<dbReference type="Proteomes" id="UP000006548">
    <property type="component" value="Chromosome 3"/>
</dbReference>
<dbReference type="ExpressionAtlas" id="Q93YN8">
    <property type="expression patterns" value="baseline and differential"/>
</dbReference>
<dbReference type="GO" id="GO:0005886">
    <property type="term" value="C:plasma membrane"/>
    <property type="evidence" value="ECO:0000314"/>
    <property type="project" value="UniProtKB"/>
</dbReference>
<dbReference type="GO" id="GO:0019900">
    <property type="term" value="F:kinase binding"/>
    <property type="evidence" value="ECO:0000353"/>
    <property type="project" value="UniProtKB"/>
</dbReference>
<dbReference type="GO" id="GO:0009737">
    <property type="term" value="P:response to abscisic acid"/>
    <property type="evidence" value="ECO:0000270"/>
    <property type="project" value="UniProtKB"/>
</dbReference>
<dbReference type="GO" id="GO:0010555">
    <property type="term" value="P:response to mannitol"/>
    <property type="evidence" value="ECO:0000270"/>
    <property type="project" value="UniProtKB"/>
</dbReference>
<dbReference type="GO" id="GO:0009651">
    <property type="term" value="P:response to salt stress"/>
    <property type="evidence" value="ECO:0000270"/>
    <property type="project" value="UniProtKB"/>
</dbReference>
<dbReference type="GO" id="GO:0009414">
    <property type="term" value="P:response to water deprivation"/>
    <property type="evidence" value="ECO:0000270"/>
    <property type="project" value="UniProtKB"/>
</dbReference>
<dbReference type="InterPro" id="IPR005516">
    <property type="entry name" value="Remorin_C"/>
</dbReference>
<dbReference type="PANTHER" id="PTHR31471">
    <property type="entry name" value="OS02G0116800 PROTEIN"/>
    <property type="match status" value="1"/>
</dbReference>
<dbReference type="PANTHER" id="PTHR31471:SF47">
    <property type="entry name" value="REMORIN 4.1"/>
    <property type="match status" value="1"/>
</dbReference>
<dbReference type="Pfam" id="PF03763">
    <property type="entry name" value="Remorin_C"/>
    <property type="match status" value="1"/>
</dbReference>